<protein>
    <recommendedName>
        <fullName>Venom protein 55.1</fullName>
    </recommendedName>
</protein>
<proteinExistence type="inferred from homology"/>
<dbReference type="EMBL" id="GT028915">
    <property type="status" value="NOT_ANNOTATED_CDS"/>
    <property type="molecule type" value="mRNA"/>
</dbReference>
<dbReference type="GO" id="GO:0005615">
    <property type="term" value="C:extracellular space"/>
    <property type="evidence" value="ECO:0007669"/>
    <property type="project" value="TreeGrafter"/>
</dbReference>
<dbReference type="GO" id="GO:0008613">
    <property type="term" value="F:diuretic hormone activity"/>
    <property type="evidence" value="ECO:0007669"/>
    <property type="project" value="InterPro"/>
</dbReference>
<dbReference type="GO" id="GO:0001664">
    <property type="term" value="F:G protein-coupled receptor binding"/>
    <property type="evidence" value="ECO:0007669"/>
    <property type="project" value="TreeGrafter"/>
</dbReference>
<dbReference type="GO" id="GO:0007589">
    <property type="term" value="P:body fluid secretion"/>
    <property type="evidence" value="ECO:0007669"/>
    <property type="project" value="InterPro"/>
</dbReference>
<dbReference type="InterPro" id="IPR034439">
    <property type="entry name" value="DH2-like"/>
</dbReference>
<dbReference type="PANTHER" id="PTHR41146">
    <property type="entry name" value="DIURETIC HORMONE CLASS 2"/>
    <property type="match status" value="1"/>
</dbReference>
<dbReference type="PANTHER" id="PTHR41146:SF1">
    <property type="entry name" value="DIURETIC HORMONE CLASS 2"/>
    <property type="match status" value="1"/>
</dbReference>
<keyword id="KW-0027">Amidation</keyword>
<keyword id="KW-0165">Cleavage on pair of basic residues</keyword>
<keyword id="KW-0964">Secreted</keyword>
<keyword id="KW-0732">Signal</keyword>
<reference key="1">
    <citation type="journal article" date="2010" name="BMC Genomics">
        <title>Comparative venom gland transcriptome analysis of the scorpion Lychas mucronatus reveals intraspecific toxic gene diversity and new venomous components.</title>
        <authorList>
            <person name="Zhao R."/>
            <person name="Ma Y."/>
            <person name="He Y."/>
            <person name="Di Z."/>
            <person name="Wu Y.-L."/>
            <person name="Cao Z.-J."/>
            <person name="Li W.-X."/>
        </authorList>
    </citation>
    <scope>NUCLEOTIDE SEQUENCE [MRNA]</scope>
    <source>
        <strain>Yunnan</strain>
        <tissue>Venom gland</tissue>
    </source>
</reference>
<accession>P0CJ11</accession>
<feature type="signal peptide" evidence="2">
    <location>
        <begin position="1"/>
        <end position="19"/>
    </location>
</feature>
<feature type="chain" id="PRO_0000403903" description="Venom protein 55.1">
    <location>
        <begin position="20"/>
        <end position="57"/>
    </location>
</feature>
<feature type="propeptide" id="PRO_0000432439" evidence="1">
    <location>
        <begin position="61"/>
        <end position="73"/>
    </location>
</feature>
<feature type="modified residue" description="Proline amide" evidence="1">
    <location>
        <position position="57"/>
    </location>
</feature>
<evidence type="ECO:0000250" key="1"/>
<evidence type="ECO:0000255" key="2"/>
<evidence type="ECO:0000305" key="3"/>
<sequence>MNFLCILFVVSLISSLSKCTTSSMKRELDLGMSRGHSGSQVGKALLGIQSANRTDGPGRKRRSFDLYALVNAK</sequence>
<comment type="function">
    <text evidence="1">Regulates fluid secretion.</text>
</comment>
<comment type="subcellular location">
    <subcellularLocation>
        <location evidence="1">Secreted</location>
    </subcellularLocation>
</comment>
<comment type="tissue specificity">
    <text evidence="3">Expressed by the venom gland.</text>
</comment>
<comment type="similarity">
    <text evidence="3">Belongs to the diuretic hormone class 2 family.</text>
</comment>
<organism>
    <name type="scientific">Lychas mucronatus</name>
    <name type="common">Chinese swimming scorpion</name>
    <dbReference type="NCBI Taxonomy" id="172552"/>
    <lineage>
        <taxon>Eukaryota</taxon>
        <taxon>Metazoa</taxon>
        <taxon>Ecdysozoa</taxon>
        <taxon>Arthropoda</taxon>
        <taxon>Chelicerata</taxon>
        <taxon>Arachnida</taxon>
        <taxon>Scorpiones</taxon>
        <taxon>Buthida</taxon>
        <taxon>Buthoidea</taxon>
        <taxon>Buthidae</taxon>
        <taxon>Lychas</taxon>
    </lineage>
</organism>
<name>VP55_LYCMC</name>